<organism>
    <name type="scientific">Claviceps purpurea (strain 20.1)</name>
    <name type="common">Ergot fungus</name>
    <name type="synonym">Sphacelia segetum</name>
    <dbReference type="NCBI Taxonomy" id="1111077"/>
    <lineage>
        <taxon>Eukaryota</taxon>
        <taxon>Fungi</taxon>
        <taxon>Dikarya</taxon>
        <taxon>Ascomycota</taxon>
        <taxon>Pezizomycotina</taxon>
        <taxon>Sordariomycetes</taxon>
        <taxon>Hypocreomycetidae</taxon>
        <taxon>Hypocreales</taxon>
        <taxon>Clavicipitaceae</taxon>
        <taxon>Claviceps</taxon>
    </lineage>
</organism>
<name>PIG3_CLAP2</name>
<comment type="function">
    <text evidence="1 2 3 4">Part of the ergochrome gene cluster responsible for the typical purple-black color of the ergot sclerotia (PubMed:28955461). The ergochrome gene cluster produces several ergot pigments including the yellow ergochrome secalonic acid and its derivatives, as well as the red anthraquinones endocrocin and clavorubin (PubMed:28955461). The pathway begins with the synthesis of atrochrysone thioester by the polyketide synthase (PKS) CPUR_05437 (By similarity). The atrochrysone carboxyl ACP thioesterase CPUR_05436 then breaks the thioester bond and releases the atrochrysone carboxylic acid from CPUR_05437 (By similarity). The atrochrysone carboxylic acid is then converted to atrochrysone which is further transformed into emodin anthrone (By similarity). The next step is performed by the anthrone oxygenase CPUR_05434 that catalyzes the oxidation of emodinanthrone to emodin (By similarity). Emodin is further modified to yield monodictyphenone via several steps involving CPUR_05427, CPUR_05428, CPUR_05429 and CPUR_05430 (By similarity). The short chain dehydrogenase/reductase CPUR_05418 then catalyzes the C-5 ketoreduction to give the xanthone skeleton of the monomeric units (PubMed:32105084). Ergochromes formation requires further dimerization steps of different xanthone units, probably catalyzed by the cytochrome P450 monooxygenase CPUR_05419 (PubMed:28955461). CPUR_05425, CPUR_05426 and CPUR_05431 are unique to Claviceps, thus it is likely that they are involved in further modification of xanthone units or in their dimerization (PubMed:28955461). The yellow ergochromes and the red anthraquinone pigments endocrocin and clavorubin are products from the same PKS derived precursors and the latter are likely shunt products in the pathway of xanthone biosynthesis (PubMed:28955461). It is proposed that atrochrysone carboxylic acid released from the PKS CPUR_05437 can also be converted to endocrocin anthrone which is further oxidized into endocrocin by CPUR_05435 (By similarity). Endocrocin could be then modified to clavorubin, possibly by CPUR_05423 and CPUR_05431 (PubMed:28955461). Clavorubin is the principal anthraquinone metabolite produced by the cluster with a much higher yield compared to endocrocin (PubMed:28955461).</text>
</comment>
<comment type="pathway">
    <text evidence="6">Pigment biosynthesis.</text>
</comment>
<comment type="induction">
    <text evidence="3">Expression correlates with the formation of the sclerotia and thus the pigment production and is directly regulated by the cluster-specific activator CPUR_05433 (PubMed:28955461).</text>
</comment>
<gene>
    <name type="ORF">CPUR_05425</name>
</gene>
<protein>
    <recommendedName>
        <fullName evidence="5">Ergochrome gene cluster protein CPUR_05425</fullName>
    </recommendedName>
</protein>
<keyword id="KW-1185">Reference proteome</keyword>
<sequence>MPAPAEVQQATLSKFVDAWKRWNADDFIGLWSDSFTFKVLPLSDGKPTRPRDKVAPLYRNLIGTLTDYKLDVKHIVHDASKGKACIYAVASANAPCGDYKNEQAIFITFSESGDKIESMEEMNDNAFRKEWDPKYHAYHGYGQPPTAKAAAGS</sequence>
<dbReference type="EMBL" id="CAGA01000032">
    <property type="protein sequence ID" value="CCE31572.1"/>
    <property type="molecule type" value="Genomic_DNA"/>
</dbReference>
<dbReference type="SMR" id="M1VWN3"/>
<dbReference type="STRING" id="1111077.M1VWN3"/>
<dbReference type="VEuPathDB" id="FungiDB:CPUR_05425"/>
<dbReference type="eggNOG" id="ENOG502SPRW">
    <property type="taxonomic scope" value="Eukaryota"/>
</dbReference>
<dbReference type="HOGENOM" id="CLU_108113_0_0_1"/>
<dbReference type="OrthoDB" id="3758478at2759"/>
<dbReference type="PhylomeDB" id="M1VWN3"/>
<dbReference type="Proteomes" id="UP000016801">
    <property type="component" value="Unassembled WGS sequence"/>
</dbReference>
<dbReference type="Gene3D" id="3.10.450.50">
    <property type="match status" value="1"/>
</dbReference>
<dbReference type="InterPro" id="IPR050977">
    <property type="entry name" value="Fungal_Meroterpenoid_Isomerase"/>
</dbReference>
<dbReference type="InterPro" id="IPR032710">
    <property type="entry name" value="NTF2-like_dom_sf"/>
</dbReference>
<dbReference type="PANTHER" id="PTHR39598:SF1">
    <property type="entry name" value="AUSTINOID BIOSYNTHESIS CLUSTERS PROTEIN F-RELATED"/>
    <property type="match status" value="1"/>
</dbReference>
<dbReference type="PANTHER" id="PTHR39598">
    <property type="entry name" value="AUSTINOL SYNTHESIS PROTEIN F-RELATED"/>
    <property type="match status" value="1"/>
</dbReference>
<dbReference type="SUPFAM" id="SSF54427">
    <property type="entry name" value="NTF2-like"/>
    <property type="match status" value="1"/>
</dbReference>
<reference key="1">
    <citation type="journal article" date="2013" name="PLoS Genet.">
        <title>Plant-symbiotic fungi as chemical engineers: Multi-genome analysis of the Clavicipitaceae reveals dynamics of alkaloid loci.</title>
        <authorList>
            <person name="Schardl C.L."/>
            <person name="Young C.A."/>
            <person name="Hesse U."/>
            <person name="Amyotte S.G."/>
            <person name="Andreeva K."/>
            <person name="Calie P.J."/>
            <person name="Fleetwood D.J."/>
            <person name="Haws D.C."/>
            <person name="Moore N."/>
            <person name="Oeser B."/>
            <person name="Panaccione D.G."/>
            <person name="Schweri K.K."/>
            <person name="Voisey C.R."/>
            <person name="Farman M.L."/>
            <person name="Jaromczyk J.W."/>
            <person name="Roe B.A."/>
            <person name="O'Sullivan D.M."/>
            <person name="Scott B."/>
            <person name="Tudzynski P."/>
            <person name="An Z."/>
            <person name="Arnaoudova E.G."/>
            <person name="Bullock C.T."/>
            <person name="Charlton N.D."/>
            <person name="Chen L."/>
            <person name="Cox M."/>
            <person name="Dinkins R.D."/>
            <person name="Florea S."/>
            <person name="Glenn A.E."/>
            <person name="Gordon A."/>
            <person name="Gueldener U."/>
            <person name="Harris D.R."/>
            <person name="Hollin W."/>
            <person name="Jaromczyk J."/>
            <person name="Johnson R.D."/>
            <person name="Khan A.K."/>
            <person name="Leistner E."/>
            <person name="Leuchtmann A."/>
            <person name="Li C."/>
            <person name="Liu J."/>
            <person name="Liu J."/>
            <person name="Liu M."/>
            <person name="Mace W."/>
            <person name="Machado C."/>
            <person name="Nagabhyru P."/>
            <person name="Pan J."/>
            <person name="Schmid J."/>
            <person name="Sugawara K."/>
            <person name="Steiner U."/>
            <person name="Takach J.E."/>
            <person name="Tanaka E."/>
            <person name="Webb J.S."/>
            <person name="Wilson E.V."/>
            <person name="Wiseman J.L."/>
            <person name="Yoshida R."/>
            <person name="Zeng Z."/>
        </authorList>
    </citation>
    <scope>NUCLEOTIDE SEQUENCE [LARGE SCALE GENOMIC DNA]</scope>
    <source>
        <strain>20.1</strain>
    </source>
</reference>
<reference key="2">
    <citation type="journal article" date="2016" name="Fungal Biol. Biotechnol.">
        <title>Identification and characterization of the ergochrome gene cluster in the plant pathogenic fungus Claviceps purpurea.</title>
        <authorList>
            <person name="Neubauer L."/>
            <person name="Dopstadt J."/>
            <person name="Humpf H.U."/>
            <person name="Tudzynski P."/>
        </authorList>
    </citation>
    <scope>FUNCTION</scope>
    <scope>INDUCTION</scope>
</reference>
<reference key="3">
    <citation type="journal article" date="2020" name="Org. Lett.">
        <title>Unraveling the fungal strategy for tetrahydroxanthone biosynthesis and diversification.</title>
        <authorList>
            <person name="Wei X."/>
            <person name="Matsuda Y."/>
        </authorList>
    </citation>
    <scope>FUNCTION</scope>
</reference>
<evidence type="ECO:0000250" key="1">
    <source>
        <dbReference type="UniProtKB" id="Q4W944"/>
    </source>
</evidence>
<evidence type="ECO:0000250" key="2">
    <source>
        <dbReference type="UniProtKB" id="Q5BH30"/>
    </source>
</evidence>
<evidence type="ECO:0000269" key="3">
    <source>
    </source>
</evidence>
<evidence type="ECO:0000269" key="4">
    <source>
    </source>
</evidence>
<evidence type="ECO:0000303" key="5">
    <source>
    </source>
</evidence>
<evidence type="ECO:0000305" key="6">
    <source>
    </source>
</evidence>
<proteinExistence type="evidence at transcript level"/>
<accession>M1VWN3</accession>
<feature type="chain" id="PRO_0000443974" description="Ergochrome gene cluster protein CPUR_05425">
    <location>
        <begin position="1"/>
        <end position="153"/>
    </location>
</feature>